<accession>A0B8J6</accession>
<keyword id="KW-0028">Amino-acid biosynthesis</keyword>
<keyword id="KW-0963">Cytoplasm</keyword>
<keyword id="KW-0554">One-carbon metabolism</keyword>
<keyword id="KW-0663">Pyridoxal phosphate</keyword>
<keyword id="KW-1185">Reference proteome</keyword>
<keyword id="KW-0808">Transferase</keyword>
<dbReference type="EC" id="2.1.2.1" evidence="1"/>
<dbReference type="EMBL" id="CP000477">
    <property type="protein sequence ID" value="ABK15020.1"/>
    <property type="molecule type" value="Genomic_DNA"/>
</dbReference>
<dbReference type="RefSeq" id="WP_011696412.1">
    <property type="nucleotide sequence ID" value="NC_008553.1"/>
</dbReference>
<dbReference type="SMR" id="A0B8J6"/>
<dbReference type="STRING" id="349307.Mthe_1241"/>
<dbReference type="GeneID" id="4463172"/>
<dbReference type="KEGG" id="mtp:Mthe_1241"/>
<dbReference type="HOGENOM" id="CLU_022477_2_1_2"/>
<dbReference type="UniPathway" id="UPA00193"/>
<dbReference type="UniPathway" id="UPA00288">
    <property type="reaction ID" value="UER01023"/>
</dbReference>
<dbReference type="Proteomes" id="UP000000674">
    <property type="component" value="Chromosome"/>
</dbReference>
<dbReference type="GO" id="GO:0005829">
    <property type="term" value="C:cytosol"/>
    <property type="evidence" value="ECO:0007669"/>
    <property type="project" value="TreeGrafter"/>
</dbReference>
<dbReference type="GO" id="GO:0004372">
    <property type="term" value="F:glycine hydroxymethyltransferase activity"/>
    <property type="evidence" value="ECO:0007669"/>
    <property type="project" value="UniProtKB-UniRule"/>
</dbReference>
<dbReference type="GO" id="GO:0030170">
    <property type="term" value="F:pyridoxal phosphate binding"/>
    <property type="evidence" value="ECO:0007669"/>
    <property type="project" value="UniProtKB-UniRule"/>
</dbReference>
<dbReference type="GO" id="GO:0019264">
    <property type="term" value="P:glycine biosynthetic process from serine"/>
    <property type="evidence" value="ECO:0007669"/>
    <property type="project" value="UniProtKB-UniRule"/>
</dbReference>
<dbReference type="GO" id="GO:0035999">
    <property type="term" value="P:tetrahydrofolate interconversion"/>
    <property type="evidence" value="ECO:0007669"/>
    <property type="project" value="UniProtKB-UniRule"/>
</dbReference>
<dbReference type="CDD" id="cd00378">
    <property type="entry name" value="SHMT"/>
    <property type="match status" value="1"/>
</dbReference>
<dbReference type="FunFam" id="3.40.640.10:FF:000001">
    <property type="entry name" value="Serine hydroxymethyltransferase"/>
    <property type="match status" value="1"/>
</dbReference>
<dbReference type="FunFam" id="3.90.1150.10:FF:000003">
    <property type="entry name" value="Serine hydroxymethyltransferase"/>
    <property type="match status" value="1"/>
</dbReference>
<dbReference type="Gene3D" id="3.90.1150.10">
    <property type="entry name" value="Aspartate Aminotransferase, domain 1"/>
    <property type="match status" value="1"/>
</dbReference>
<dbReference type="Gene3D" id="3.40.640.10">
    <property type="entry name" value="Type I PLP-dependent aspartate aminotransferase-like (Major domain)"/>
    <property type="match status" value="1"/>
</dbReference>
<dbReference type="HAMAP" id="MF_00051">
    <property type="entry name" value="SHMT"/>
    <property type="match status" value="1"/>
</dbReference>
<dbReference type="InterPro" id="IPR015424">
    <property type="entry name" value="PyrdxlP-dep_Trfase"/>
</dbReference>
<dbReference type="InterPro" id="IPR015421">
    <property type="entry name" value="PyrdxlP-dep_Trfase_major"/>
</dbReference>
<dbReference type="InterPro" id="IPR015422">
    <property type="entry name" value="PyrdxlP-dep_Trfase_small"/>
</dbReference>
<dbReference type="InterPro" id="IPR001085">
    <property type="entry name" value="Ser_HO-MeTrfase"/>
</dbReference>
<dbReference type="InterPro" id="IPR049943">
    <property type="entry name" value="Ser_HO-MeTrfase-like"/>
</dbReference>
<dbReference type="InterPro" id="IPR019798">
    <property type="entry name" value="Ser_HO-MeTrfase_PLP_BS"/>
</dbReference>
<dbReference type="InterPro" id="IPR039429">
    <property type="entry name" value="SHMT-like_dom"/>
</dbReference>
<dbReference type="NCBIfam" id="NF000586">
    <property type="entry name" value="PRK00011.1"/>
    <property type="match status" value="1"/>
</dbReference>
<dbReference type="PANTHER" id="PTHR11680">
    <property type="entry name" value="SERINE HYDROXYMETHYLTRANSFERASE"/>
    <property type="match status" value="1"/>
</dbReference>
<dbReference type="PANTHER" id="PTHR11680:SF35">
    <property type="entry name" value="SERINE HYDROXYMETHYLTRANSFERASE 1"/>
    <property type="match status" value="1"/>
</dbReference>
<dbReference type="Pfam" id="PF00464">
    <property type="entry name" value="SHMT"/>
    <property type="match status" value="1"/>
</dbReference>
<dbReference type="PIRSF" id="PIRSF000412">
    <property type="entry name" value="SHMT"/>
    <property type="match status" value="1"/>
</dbReference>
<dbReference type="SUPFAM" id="SSF53383">
    <property type="entry name" value="PLP-dependent transferases"/>
    <property type="match status" value="1"/>
</dbReference>
<dbReference type="PROSITE" id="PS00096">
    <property type="entry name" value="SHMT"/>
    <property type="match status" value="1"/>
</dbReference>
<feature type="chain" id="PRO_1000006281" description="Serine hydroxymethyltransferase">
    <location>
        <begin position="1"/>
        <end position="414"/>
    </location>
</feature>
<feature type="binding site" evidence="1">
    <location>
        <position position="117"/>
    </location>
    <ligand>
        <name>(6S)-5,6,7,8-tetrahydrofolate</name>
        <dbReference type="ChEBI" id="CHEBI:57453"/>
    </ligand>
</feature>
<feature type="binding site" evidence="1">
    <location>
        <begin position="121"/>
        <end position="123"/>
    </location>
    <ligand>
        <name>(6S)-5,6,7,8-tetrahydrofolate</name>
        <dbReference type="ChEBI" id="CHEBI:57453"/>
    </ligand>
</feature>
<feature type="binding site" evidence="1">
    <location>
        <position position="241"/>
    </location>
    <ligand>
        <name>(6S)-5,6,7,8-tetrahydrofolate</name>
        <dbReference type="ChEBI" id="CHEBI:57453"/>
    </ligand>
</feature>
<feature type="binding site" evidence="1">
    <location>
        <begin position="349"/>
        <end position="351"/>
    </location>
    <ligand>
        <name>(6S)-5,6,7,8-tetrahydrofolate</name>
        <dbReference type="ChEBI" id="CHEBI:57453"/>
    </ligand>
</feature>
<feature type="site" description="Plays an important role in substrate specificity" evidence="1">
    <location>
        <position position="225"/>
    </location>
</feature>
<feature type="modified residue" description="N6-(pyridoxal phosphate)lysine" evidence="1">
    <location>
        <position position="226"/>
    </location>
</feature>
<name>GLYA_METTP</name>
<reference key="1">
    <citation type="submission" date="2006-10" db="EMBL/GenBank/DDBJ databases">
        <title>Complete sequence of Methanosaeta thermophila PT.</title>
        <authorList>
            <consortium name="US DOE Joint Genome Institute"/>
            <person name="Copeland A."/>
            <person name="Lucas S."/>
            <person name="Lapidus A."/>
            <person name="Barry K."/>
            <person name="Detter J.C."/>
            <person name="Glavina del Rio T."/>
            <person name="Hammon N."/>
            <person name="Israni S."/>
            <person name="Pitluck S."/>
            <person name="Chain P."/>
            <person name="Malfatti S."/>
            <person name="Shin M."/>
            <person name="Vergez L."/>
            <person name="Schmutz J."/>
            <person name="Larimer F."/>
            <person name="Land M."/>
            <person name="Hauser L."/>
            <person name="Kyrpides N."/>
            <person name="Kim E."/>
            <person name="Smith K.S."/>
            <person name="Ingram-Smith C."/>
            <person name="Richardson P."/>
        </authorList>
    </citation>
    <scope>NUCLEOTIDE SEQUENCE [LARGE SCALE GENOMIC DNA]</scope>
    <source>
        <strain>DSM 6194 / JCM 14653 / NBRC 101360 / PT</strain>
    </source>
</reference>
<comment type="function">
    <text evidence="1">Catalyzes the reversible interconversion of serine and glycine with tetrahydrofolate (THF) serving as the one-carbon carrier. Also exhibits THF-independent aldolase activity toward beta-hydroxyamino acids, producing glycine and aldehydes, via a retro-aldol mechanism.</text>
</comment>
<comment type="catalytic activity">
    <reaction evidence="1">
        <text>(6R)-5,10-methylene-5,6,7,8-tetrahydrofolate + glycine + H2O = (6S)-5,6,7,8-tetrahydrofolate + L-serine</text>
        <dbReference type="Rhea" id="RHEA:15481"/>
        <dbReference type="ChEBI" id="CHEBI:15377"/>
        <dbReference type="ChEBI" id="CHEBI:15636"/>
        <dbReference type="ChEBI" id="CHEBI:33384"/>
        <dbReference type="ChEBI" id="CHEBI:57305"/>
        <dbReference type="ChEBI" id="CHEBI:57453"/>
        <dbReference type="EC" id="2.1.2.1"/>
    </reaction>
</comment>
<comment type="cofactor">
    <cofactor evidence="1">
        <name>pyridoxal 5'-phosphate</name>
        <dbReference type="ChEBI" id="CHEBI:597326"/>
    </cofactor>
</comment>
<comment type="pathway">
    <text evidence="1">One-carbon metabolism; tetrahydrofolate interconversion.</text>
</comment>
<comment type="pathway">
    <text evidence="1">Amino-acid biosynthesis; glycine biosynthesis; glycine from L-serine: step 1/1.</text>
</comment>
<comment type="subunit">
    <text evidence="1">Homodimer.</text>
</comment>
<comment type="subcellular location">
    <subcellularLocation>
        <location evidence="1">Cytoplasm</location>
    </subcellularLocation>
</comment>
<comment type="similarity">
    <text evidence="1">Belongs to the SHMT family.</text>
</comment>
<evidence type="ECO:0000255" key="1">
    <source>
        <dbReference type="HAMAP-Rule" id="MF_00051"/>
    </source>
</evidence>
<gene>
    <name evidence="1" type="primary">glyA</name>
    <name type="ordered locus">Mthe_1241</name>
</gene>
<sequence length="414" mass="45417">MSLLDHVDPEISAVIRKELDRQRNTLVLVAAENFTSPAVMEAQGCVMTNKYAEGYPGKRYYRGCAFMDEAENLARDRCKKLFGAEHVNVQPHSGSQANMAAYFATLKPGDTIMGMNLDHGGHLSHGSPVNFSGKLYHVVPYGVSRKTEMLDYSEILDVARECRPQMIVCGASAYPRIIDFKAMREIADEVGALLMADIAHIAGLVAAGVHPSPIPYADIVTTTTHKTLRGPRGGVIMCREELAQAIDRAVFPGIQGGPMMHTIAAKAVAFKEAMTPEFRRYQEQIVRNAAALADRLIENGFDLVSGGTDNHLMLVKLLKEGITGKEADETLESAGIALNKNMIPFDPRTPFVTSGIRIGTPAVTSRGMKENEMREIADLITEVIRDMKNPATIESVRSRVRALCERFPLYPELG</sequence>
<organism>
    <name type="scientific">Methanothrix thermoacetophila (strain DSM 6194 / JCM 14653 / NBRC 101360 / PT)</name>
    <name type="common">Methanosaeta thermophila</name>
    <dbReference type="NCBI Taxonomy" id="349307"/>
    <lineage>
        <taxon>Archaea</taxon>
        <taxon>Methanobacteriati</taxon>
        <taxon>Methanobacteriota</taxon>
        <taxon>Stenosarchaea group</taxon>
        <taxon>Methanomicrobia</taxon>
        <taxon>Methanotrichales</taxon>
        <taxon>Methanotrichaceae</taxon>
        <taxon>Methanothrix</taxon>
    </lineage>
</organism>
<proteinExistence type="inferred from homology"/>
<protein>
    <recommendedName>
        <fullName evidence="1">Serine hydroxymethyltransferase</fullName>
        <shortName evidence="1">SHMT</shortName>
        <shortName evidence="1">Serine methylase</shortName>
        <ecNumber evidence="1">2.1.2.1</ecNumber>
    </recommendedName>
</protein>